<name>YNCE_SALTI</name>
<organism>
    <name type="scientific">Salmonella typhi</name>
    <dbReference type="NCBI Taxonomy" id="90370"/>
    <lineage>
        <taxon>Bacteria</taxon>
        <taxon>Pseudomonadati</taxon>
        <taxon>Pseudomonadota</taxon>
        <taxon>Gammaproteobacteria</taxon>
        <taxon>Enterobacterales</taxon>
        <taxon>Enterobacteriaceae</taxon>
        <taxon>Salmonella</taxon>
    </lineage>
</organism>
<protein>
    <recommendedName>
        <fullName>Uncharacterized protein YncE</fullName>
    </recommendedName>
</protein>
<proteinExistence type="inferred from homology"/>
<gene>
    <name type="primary">yncE</name>
    <name type="ordered locus">STY1479</name>
    <name type="ordered locus">t1496</name>
</gene>
<reference key="1">
    <citation type="journal article" date="2001" name="Nature">
        <title>Complete genome sequence of a multiple drug resistant Salmonella enterica serovar Typhi CT18.</title>
        <authorList>
            <person name="Parkhill J."/>
            <person name="Dougan G."/>
            <person name="James K.D."/>
            <person name="Thomson N.R."/>
            <person name="Pickard D."/>
            <person name="Wain J."/>
            <person name="Churcher C.M."/>
            <person name="Mungall K.L."/>
            <person name="Bentley S.D."/>
            <person name="Holden M.T.G."/>
            <person name="Sebaihia M."/>
            <person name="Baker S."/>
            <person name="Basham D."/>
            <person name="Brooks K."/>
            <person name="Chillingworth T."/>
            <person name="Connerton P."/>
            <person name="Cronin A."/>
            <person name="Davis P."/>
            <person name="Davies R.M."/>
            <person name="Dowd L."/>
            <person name="White N."/>
            <person name="Farrar J."/>
            <person name="Feltwell T."/>
            <person name="Hamlin N."/>
            <person name="Haque A."/>
            <person name="Hien T.T."/>
            <person name="Holroyd S."/>
            <person name="Jagels K."/>
            <person name="Krogh A."/>
            <person name="Larsen T.S."/>
            <person name="Leather S."/>
            <person name="Moule S."/>
            <person name="O'Gaora P."/>
            <person name="Parry C."/>
            <person name="Quail M.A."/>
            <person name="Rutherford K.M."/>
            <person name="Simmonds M."/>
            <person name="Skelton J."/>
            <person name="Stevens K."/>
            <person name="Whitehead S."/>
            <person name="Barrell B.G."/>
        </authorList>
    </citation>
    <scope>NUCLEOTIDE SEQUENCE [LARGE SCALE GENOMIC DNA]</scope>
    <source>
        <strain>CT18</strain>
    </source>
</reference>
<reference key="2">
    <citation type="journal article" date="2003" name="J. Bacteriol.">
        <title>Comparative genomics of Salmonella enterica serovar Typhi strains Ty2 and CT18.</title>
        <authorList>
            <person name="Deng W."/>
            <person name="Liou S.-R."/>
            <person name="Plunkett G. III"/>
            <person name="Mayhew G.F."/>
            <person name="Rose D.J."/>
            <person name="Burland V."/>
            <person name="Kodoyianni V."/>
            <person name="Schwartz D.C."/>
            <person name="Blattner F.R."/>
        </authorList>
    </citation>
    <scope>NUCLEOTIDE SEQUENCE [LARGE SCALE GENOMIC DNA]</scope>
    <source>
        <strain>ATCC 700931 / Ty2</strain>
    </source>
</reference>
<feature type="signal peptide" evidence="1">
    <location>
        <begin position="1"/>
        <end position="30"/>
    </location>
</feature>
<feature type="chain" id="PRO_0000013840" description="Uncharacterized protein YncE">
    <location>
        <begin position="31"/>
        <end position="353"/>
    </location>
</feature>
<evidence type="ECO:0000255" key="1"/>
<sequence>MHLRHLFSPRLRGSLLLGSLLVASSFSTLAAEDMLRKAVGKGAYEMAWSQQENALWLATSQSRKLDKGGVVYRLDPVTLEITQAIHNDLKPFGATINAATQTLWFGNTINSAVTAIDAKTGDVKGRLVLDARKRTEEVRPLQPRELVADAATNTIYISGVGKESAIWVVDGETIKLKTTIENTGKMSTGLALDSKAQRLYTTNADGEFITIDTASNKILSRKKLLDDGKEHFFINLSLDTAGHRAFITDSKATEVLVVDTRNGNILAKIAAPASLAVLYNPTRNEAYVTHRQAGQVSVIDAKTYNVVKTFDTPTYPNSLALSADGKTLYVSVKQKSTREQEATQPDDVIRIAL</sequence>
<dbReference type="EMBL" id="AL513382">
    <property type="protein sequence ID" value="CAD01738.1"/>
    <property type="molecule type" value="Genomic_DNA"/>
</dbReference>
<dbReference type="EMBL" id="AE014613">
    <property type="protein sequence ID" value="AAO69131.1"/>
    <property type="molecule type" value="Genomic_DNA"/>
</dbReference>
<dbReference type="RefSeq" id="NP_455910.1">
    <property type="nucleotide sequence ID" value="NC_003198.1"/>
</dbReference>
<dbReference type="RefSeq" id="WP_000550638.1">
    <property type="nucleotide sequence ID" value="NZ_WSUR01000020.1"/>
</dbReference>
<dbReference type="SMR" id="Q8Z740"/>
<dbReference type="STRING" id="220341.gene:17585428"/>
<dbReference type="KEGG" id="stt:t1496"/>
<dbReference type="KEGG" id="sty:STY1479"/>
<dbReference type="PATRIC" id="fig|220341.7.peg.1487"/>
<dbReference type="eggNOG" id="COG3391">
    <property type="taxonomic scope" value="Bacteria"/>
</dbReference>
<dbReference type="HOGENOM" id="CLU_056358_1_0_6"/>
<dbReference type="OMA" id="QDDGKEH"/>
<dbReference type="OrthoDB" id="7767057at2"/>
<dbReference type="Proteomes" id="UP000000541">
    <property type="component" value="Chromosome"/>
</dbReference>
<dbReference type="Proteomes" id="UP000002670">
    <property type="component" value="Chromosome"/>
</dbReference>
<dbReference type="Gene3D" id="2.130.10.10">
    <property type="entry name" value="YVTN repeat-like/Quinoprotein amine dehydrogenase"/>
    <property type="match status" value="1"/>
</dbReference>
<dbReference type="InterPro" id="IPR011048">
    <property type="entry name" value="Haem_d1_sf"/>
</dbReference>
<dbReference type="InterPro" id="IPR051200">
    <property type="entry name" value="Host-pathogen_enzymatic-act"/>
</dbReference>
<dbReference type="InterPro" id="IPR015943">
    <property type="entry name" value="WD40/YVTN_repeat-like_dom_sf"/>
</dbReference>
<dbReference type="InterPro" id="IPR048433">
    <property type="entry name" value="YNCE-like_beta-prop"/>
</dbReference>
<dbReference type="PANTHER" id="PTHR47197:SF3">
    <property type="entry name" value="DIHYDRO-HEME D1 DEHYDROGENASE"/>
    <property type="match status" value="1"/>
</dbReference>
<dbReference type="PANTHER" id="PTHR47197">
    <property type="entry name" value="PROTEIN NIRF"/>
    <property type="match status" value="1"/>
</dbReference>
<dbReference type="Pfam" id="PF21783">
    <property type="entry name" value="YNCE"/>
    <property type="match status" value="1"/>
</dbReference>
<dbReference type="SUPFAM" id="SSF51004">
    <property type="entry name" value="C-terminal (heme d1) domain of cytochrome cd1-nitrite reductase"/>
    <property type="match status" value="1"/>
</dbReference>
<accession>Q8Z740</accession>
<keyword id="KW-0732">Signal</keyword>